<name>HOLB_BUCAI</name>
<keyword id="KW-0235">DNA replication</keyword>
<keyword id="KW-0239">DNA-directed DNA polymerase</keyword>
<keyword id="KW-0548">Nucleotidyltransferase</keyword>
<keyword id="KW-1185">Reference proteome</keyword>
<keyword id="KW-0808">Transferase</keyword>
<protein>
    <recommendedName>
        <fullName>DNA polymerase III subunit delta'</fullName>
        <ecNumber>2.7.7.7</ecNumber>
    </recommendedName>
</protein>
<proteinExistence type="inferred from homology"/>
<dbReference type="EC" id="2.7.7.7"/>
<dbReference type="EMBL" id="BA000003">
    <property type="protein sequence ID" value="BAB13058.1"/>
    <property type="molecule type" value="Genomic_DNA"/>
</dbReference>
<dbReference type="RefSeq" id="NP_240172.1">
    <property type="nucleotide sequence ID" value="NC_002528.1"/>
</dbReference>
<dbReference type="RefSeq" id="WP_010896082.1">
    <property type="nucleotide sequence ID" value="NC_002528.1"/>
</dbReference>
<dbReference type="SMR" id="P57435"/>
<dbReference type="STRING" id="563178.BUAP5A_347"/>
<dbReference type="EnsemblBacteria" id="BAB13058">
    <property type="protein sequence ID" value="BAB13058"/>
    <property type="gene ID" value="BAB13058"/>
</dbReference>
<dbReference type="KEGG" id="buc:BU354"/>
<dbReference type="PATRIC" id="fig|107806.10.peg.367"/>
<dbReference type="eggNOG" id="COG0470">
    <property type="taxonomic scope" value="Bacteria"/>
</dbReference>
<dbReference type="HOGENOM" id="CLU_006229_4_3_6"/>
<dbReference type="Proteomes" id="UP000001806">
    <property type="component" value="Chromosome"/>
</dbReference>
<dbReference type="GO" id="GO:0009360">
    <property type="term" value="C:DNA polymerase III complex"/>
    <property type="evidence" value="ECO:0007669"/>
    <property type="project" value="InterPro"/>
</dbReference>
<dbReference type="GO" id="GO:0003677">
    <property type="term" value="F:DNA binding"/>
    <property type="evidence" value="ECO:0007669"/>
    <property type="project" value="InterPro"/>
</dbReference>
<dbReference type="GO" id="GO:0003887">
    <property type="term" value="F:DNA-directed DNA polymerase activity"/>
    <property type="evidence" value="ECO:0007669"/>
    <property type="project" value="UniProtKB-KW"/>
</dbReference>
<dbReference type="GO" id="GO:0006261">
    <property type="term" value="P:DNA-templated DNA replication"/>
    <property type="evidence" value="ECO:0007669"/>
    <property type="project" value="TreeGrafter"/>
</dbReference>
<dbReference type="Gene3D" id="1.20.272.10">
    <property type="match status" value="1"/>
</dbReference>
<dbReference type="Gene3D" id="3.40.50.300">
    <property type="entry name" value="P-loop containing nucleotide triphosphate hydrolases"/>
    <property type="match status" value="1"/>
</dbReference>
<dbReference type="InterPro" id="IPR008921">
    <property type="entry name" value="DNA_pol3_clamp-load_cplx_C"/>
</dbReference>
<dbReference type="InterPro" id="IPR015199">
    <property type="entry name" value="DNA_pol_III_delta_C"/>
</dbReference>
<dbReference type="InterPro" id="IPR050238">
    <property type="entry name" value="DNA_Rep/Repair_Clamp_Loader"/>
</dbReference>
<dbReference type="InterPro" id="IPR048731">
    <property type="entry name" value="HolB_lid-gammaproteobact"/>
</dbReference>
<dbReference type="InterPro" id="IPR027417">
    <property type="entry name" value="P-loop_NTPase"/>
</dbReference>
<dbReference type="PANTHER" id="PTHR11669:SF8">
    <property type="entry name" value="DNA POLYMERASE III SUBUNIT DELTA"/>
    <property type="match status" value="1"/>
</dbReference>
<dbReference type="PANTHER" id="PTHR11669">
    <property type="entry name" value="REPLICATION FACTOR C / DNA POLYMERASE III GAMMA-TAU SUBUNIT"/>
    <property type="match status" value="1"/>
</dbReference>
<dbReference type="Pfam" id="PF13177">
    <property type="entry name" value="DNA_pol3_delta2"/>
    <property type="match status" value="1"/>
</dbReference>
<dbReference type="Pfam" id="PF09115">
    <property type="entry name" value="DNApol3-delta_C"/>
    <property type="match status" value="1"/>
</dbReference>
<dbReference type="Pfam" id="PF21500">
    <property type="entry name" value="HolB_lid"/>
    <property type="match status" value="1"/>
</dbReference>
<dbReference type="SUPFAM" id="SSF52540">
    <property type="entry name" value="P-loop containing nucleoside triphosphate hydrolases"/>
    <property type="match status" value="1"/>
</dbReference>
<dbReference type="SUPFAM" id="SSF48019">
    <property type="entry name" value="post-AAA+ oligomerization domain-like"/>
    <property type="match status" value="1"/>
</dbReference>
<accession>P57435</accession>
<sequence>MKLYPWLIKPYNNIVQQYQKKKAHHAILIKTPRGIGVSLLIWFISKWLLCLKPIGLNSCDKCHGCKLMSANNHPDWHNFTPEKNNLFSIESVRIINEKIFTCSRQGGSKIIFLSDTGKLTESAINAFLKTLEEPPRKTWFFLVNYKNLNSHSTLNSRCLIYKLFIPEEKKSLYWLKKETVKKNRSCLTALRINQGSPLYAKKFINSNLWIDRINFYECLHDSFKKNNLLKILPLITEKDSQVKIDWICFLLFDSIKFYFNENDNLTNSDQIELIQFFSYNYKNTILDTSIRTWLHCKYRLSNISGINCELLLSEQLLIWEKILNFS</sequence>
<organism>
    <name type="scientific">Buchnera aphidicola subsp. Acyrthosiphon pisum (strain APS)</name>
    <name type="common">Acyrthosiphon pisum symbiotic bacterium</name>
    <dbReference type="NCBI Taxonomy" id="107806"/>
    <lineage>
        <taxon>Bacteria</taxon>
        <taxon>Pseudomonadati</taxon>
        <taxon>Pseudomonadota</taxon>
        <taxon>Gammaproteobacteria</taxon>
        <taxon>Enterobacterales</taxon>
        <taxon>Erwiniaceae</taxon>
        <taxon>Buchnera</taxon>
    </lineage>
</organism>
<gene>
    <name type="primary">holB</name>
    <name type="ordered locus">BU354</name>
</gene>
<feature type="chain" id="PRO_0000105510" description="DNA polymerase III subunit delta'">
    <location>
        <begin position="1"/>
        <end position="326"/>
    </location>
</feature>
<evidence type="ECO:0000250" key="1"/>
<reference key="1">
    <citation type="journal article" date="2000" name="Nature">
        <title>Genome sequence of the endocellular bacterial symbiont of aphids Buchnera sp. APS.</title>
        <authorList>
            <person name="Shigenobu S."/>
            <person name="Watanabe H."/>
            <person name="Hattori M."/>
            <person name="Sakaki Y."/>
            <person name="Ishikawa H."/>
        </authorList>
    </citation>
    <scope>NUCLEOTIDE SEQUENCE [LARGE SCALE GENOMIC DNA]</scope>
    <source>
        <strain>APS</strain>
    </source>
</reference>
<comment type="function">
    <text evidence="1">DNA polymerase III is a complex, multichain enzyme responsible for most of the replicative synthesis in bacteria. This DNA polymerase also exhibits 3' to 5' exonuclease activity (By similarity).</text>
</comment>
<comment type="catalytic activity">
    <reaction>
        <text>DNA(n) + a 2'-deoxyribonucleoside 5'-triphosphate = DNA(n+1) + diphosphate</text>
        <dbReference type="Rhea" id="RHEA:22508"/>
        <dbReference type="Rhea" id="RHEA-COMP:17339"/>
        <dbReference type="Rhea" id="RHEA-COMP:17340"/>
        <dbReference type="ChEBI" id="CHEBI:33019"/>
        <dbReference type="ChEBI" id="CHEBI:61560"/>
        <dbReference type="ChEBI" id="CHEBI:173112"/>
        <dbReference type="EC" id="2.7.7.7"/>
    </reaction>
</comment>
<comment type="subunit">
    <text evidence="1">DNA polymerase III contains a core (composed of alpha, epsilon and theta chains) that associates with a tau subunit. This core dimerizes to form the POLIII' complex. PolIII' associates with the gamma complex (composed of gamma, delta, delta', psi and chi chains) and with the beta chain to form the complete DNA polymerase III complex (By similarity).</text>
</comment>